<accession>Q8IYT3</accession>
<accession>Q5VXB7</accession>
<accession>Q6P9E4</accession>
<accession>Q96KA9</accession>
<accession>Q9H5M3</accession>
<sequence length="715" mass="82277">MSLDCTSHIALGAASPAPEETYDHLSEVPVTREQLNHYRNVAQNARSELAATLVKFECAQSELQDLRSKMLSKEVSCQELKAEMESYKENNARKSSLLTSLRDRVQELEEESAALSTSKIRTEITAHAAIKENQELKKKVVELNEKLQKCSKENEENKKQVSKNCRKHEEFLTQLRDCLDPDERNDKASDEDLILKLRDLRKENEFVKGQIVILEETINVHEMEAKASRETIMRLASEVNREQKKAASCTEEKEKLNQDLLSAVEAKEALEREVKIFQERLLAGQQVWDASKQEVSLLKKSSSELEKSLKASQDAVTTSQSQYFSFREKIAALLRGRLSMTGSTEDTILEKIREMDSREESRDRMVSQLEAQISELVEQLGKESGFHQKALQRAQKAENMLETLQGQLTHLEAELVSGGVLRDNLNFEKQKYLKFLDQLSQKMKLDQMAAELGFDMRLDVVLARTEQLVRLESNAVIENKTIAHNLQRKLKTQKERLESKELHMSLLRQKIAQLEEEKQARTALVVERDNAHLTIRNLQKKVERLQKELNTCRDLHTELKAKLADTNELKIKTLEQTKAIEDLNKSRDQLEKMKEKAEKKLMSVKSELDTTEHEAKENKERARNMIEVVTSEMKTLKKSLEEAEKREKQLADFREVVSQMLGLNVTSLALPDYEIIKCLERLVHSHQHHFVTCACLKDVTTGQERHPQGHLQLLH</sequence>
<organism>
    <name type="scientific">Homo sapiens</name>
    <name type="common">Human</name>
    <dbReference type="NCBI Taxonomy" id="9606"/>
    <lineage>
        <taxon>Eukaryota</taxon>
        <taxon>Metazoa</taxon>
        <taxon>Chordata</taxon>
        <taxon>Craniata</taxon>
        <taxon>Vertebrata</taxon>
        <taxon>Euteleostomi</taxon>
        <taxon>Mammalia</taxon>
        <taxon>Eutheria</taxon>
        <taxon>Euarchontoglires</taxon>
        <taxon>Primates</taxon>
        <taxon>Haplorrhini</taxon>
        <taxon>Catarrhini</taxon>
        <taxon>Hominidae</taxon>
        <taxon>Homo</taxon>
    </lineage>
</organism>
<keyword id="KW-0175">Coiled coil</keyword>
<keyword id="KW-0333">Golgi apparatus</keyword>
<keyword id="KW-1267">Proteomics identification</keyword>
<keyword id="KW-1185">Reference proteome</keyword>
<protein>
    <recommendedName>
        <fullName evidence="5">Coiled-coil domain-containing protein 170</fullName>
    </recommendedName>
</protein>
<name>CC170_HUMAN</name>
<evidence type="ECO:0000255" key="1"/>
<evidence type="ECO:0000269" key="2">
    <source>
    </source>
</evidence>
<evidence type="ECO:0000269" key="3">
    <source>
    </source>
</evidence>
<evidence type="ECO:0000269" key="4">
    <source>
    </source>
</evidence>
<evidence type="ECO:0000305" key="5"/>
<evidence type="ECO:0000312" key="6">
    <source>
        <dbReference type="HGNC" id="HGNC:21177"/>
    </source>
</evidence>
<proteinExistence type="evidence at protein level"/>
<feature type="chain" id="PRO_0000255256" description="Coiled-coil domain-containing protein 170">
    <location>
        <begin position="1"/>
        <end position="715"/>
    </location>
</feature>
<feature type="region of interest" description="Required for binding to microtubules and Golgi apparatus location" evidence="4">
    <location>
        <begin position="355"/>
        <end position="591"/>
    </location>
</feature>
<feature type="coiled-coil region" evidence="1">
    <location>
        <begin position="30"/>
        <end position="286"/>
    </location>
</feature>
<feature type="coiled-coil region" evidence="1">
    <location>
        <begin position="360"/>
        <end position="418"/>
    </location>
</feature>
<feature type="coiled-coil region" evidence="1">
    <location>
        <begin position="478"/>
        <end position="656"/>
    </location>
</feature>
<feature type="sequence variant" id="VAR_028856" description="In dbSNP:rs12205837.">
    <original>A</original>
    <variation>V</variation>
    <location>
        <position position="269"/>
    </location>
</feature>
<feature type="sequence variant" id="VAR_028857" description="In dbSNP:rs953767." evidence="2">
    <original>F</original>
    <variation>S</variation>
    <location>
        <position position="324"/>
    </location>
</feature>
<feature type="sequence variant" id="VAR_028858" description="In dbSNP:rs17855718." evidence="3">
    <original>A</original>
    <variation>T</variation>
    <location>
        <position position="331"/>
    </location>
</feature>
<feature type="sequence variant" id="VAR_061591" description="In dbSNP:rs55868409.">
    <original>E</original>
    <variation>K</variation>
    <location>
        <position position="345"/>
    </location>
</feature>
<feature type="sequence variant" id="VAR_050805" description="In dbSNP:rs35159094.">
    <original>N</original>
    <variation>K</variation>
    <location>
        <position position="479"/>
    </location>
</feature>
<feature type="sequence variant" id="VAR_050806" description="In dbSNP:rs34430497.">
    <original>R</original>
    <variation>Q</variation>
    <location>
        <position position="553"/>
    </location>
</feature>
<feature type="sequence variant" id="VAR_028859" description="In dbSNP:rs6929137." evidence="2">
    <original>V</original>
    <variation>I</variation>
    <location>
        <position position="604"/>
    </location>
</feature>
<feature type="sequence variant" id="VAR_028860" description="In dbSNP:rs3734804." evidence="2 3">
    <original>V</original>
    <variation>I</variation>
    <location>
        <position position="683"/>
    </location>
</feature>
<feature type="sequence conflict" description="In Ref. 1; BAB15602." evidence="5" ref="1">
    <original>M</original>
    <variation>T</variation>
    <location>
        <position position="456"/>
    </location>
</feature>
<gene>
    <name evidence="6" type="primary">CCDC170</name>
    <name type="synonym">C6orf97</name>
</gene>
<comment type="function">
    <text evidence="4">Plays a role in Golgi-associated microtubules organization and stabilization.</text>
</comment>
<comment type="subunit">
    <text evidence="4">Binds Golgi-associated microtubules.</text>
</comment>
<comment type="interaction">
    <interactant intactId="EBI-2808089">
        <id>Q8IYT3</id>
    </interactant>
    <interactant intactId="EBI-741406">
        <id>P51946</id>
        <label>CCNH</label>
    </interactant>
    <organismsDiffer>false</organismsDiffer>
    <experiments>3</experiments>
</comment>
<comment type="interaction">
    <interactant intactId="EBI-2808089">
        <id>Q8IYT3</id>
    </interactant>
    <interactant intactId="EBI-740272">
        <id>Q96I25</id>
        <label>RBM17</label>
    </interactant>
    <organismsDiffer>false</organismsDiffer>
    <experiments>3</experiments>
</comment>
<comment type="subcellular location">
    <subcellularLocation>
        <location evidence="4">Golgi apparatus</location>
    </subcellularLocation>
</comment>
<comment type="sequence caution" evidence="5">
    <conflict type="erroneous initiation">
        <sequence resource="EMBL-CDS" id="BAB55025"/>
    </conflict>
    <text>Truncated N-terminus.</text>
</comment>
<reference key="1">
    <citation type="journal article" date="2004" name="Nat. Genet.">
        <title>Complete sequencing and characterization of 21,243 full-length human cDNAs.</title>
        <authorList>
            <person name="Ota T."/>
            <person name="Suzuki Y."/>
            <person name="Nishikawa T."/>
            <person name="Otsuki T."/>
            <person name="Sugiyama T."/>
            <person name="Irie R."/>
            <person name="Wakamatsu A."/>
            <person name="Hayashi K."/>
            <person name="Sato H."/>
            <person name="Nagai K."/>
            <person name="Kimura K."/>
            <person name="Makita H."/>
            <person name="Sekine M."/>
            <person name="Obayashi M."/>
            <person name="Nishi T."/>
            <person name="Shibahara T."/>
            <person name="Tanaka T."/>
            <person name="Ishii S."/>
            <person name="Yamamoto J."/>
            <person name="Saito K."/>
            <person name="Kawai Y."/>
            <person name="Isono Y."/>
            <person name="Nakamura Y."/>
            <person name="Nagahari K."/>
            <person name="Murakami K."/>
            <person name="Yasuda T."/>
            <person name="Iwayanagi T."/>
            <person name="Wagatsuma M."/>
            <person name="Shiratori A."/>
            <person name="Sudo H."/>
            <person name="Hosoiri T."/>
            <person name="Kaku Y."/>
            <person name="Kodaira H."/>
            <person name="Kondo H."/>
            <person name="Sugawara M."/>
            <person name="Takahashi M."/>
            <person name="Kanda K."/>
            <person name="Yokoi T."/>
            <person name="Furuya T."/>
            <person name="Kikkawa E."/>
            <person name="Omura Y."/>
            <person name="Abe K."/>
            <person name="Kamihara K."/>
            <person name="Katsuta N."/>
            <person name="Sato K."/>
            <person name="Tanikawa M."/>
            <person name="Yamazaki M."/>
            <person name="Ninomiya K."/>
            <person name="Ishibashi T."/>
            <person name="Yamashita H."/>
            <person name="Murakawa K."/>
            <person name="Fujimori K."/>
            <person name="Tanai H."/>
            <person name="Kimata M."/>
            <person name="Watanabe M."/>
            <person name="Hiraoka S."/>
            <person name="Chiba Y."/>
            <person name="Ishida S."/>
            <person name="Ono Y."/>
            <person name="Takiguchi S."/>
            <person name="Watanabe S."/>
            <person name="Yosida M."/>
            <person name="Hotuta T."/>
            <person name="Kusano J."/>
            <person name="Kanehori K."/>
            <person name="Takahashi-Fujii A."/>
            <person name="Hara H."/>
            <person name="Tanase T.-O."/>
            <person name="Nomura Y."/>
            <person name="Togiya S."/>
            <person name="Komai F."/>
            <person name="Hara R."/>
            <person name="Takeuchi K."/>
            <person name="Arita M."/>
            <person name="Imose N."/>
            <person name="Musashino K."/>
            <person name="Yuuki H."/>
            <person name="Oshima A."/>
            <person name="Sasaki N."/>
            <person name="Aotsuka S."/>
            <person name="Yoshikawa Y."/>
            <person name="Matsunawa H."/>
            <person name="Ichihara T."/>
            <person name="Shiohata N."/>
            <person name="Sano S."/>
            <person name="Moriya S."/>
            <person name="Momiyama H."/>
            <person name="Satoh N."/>
            <person name="Takami S."/>
            <person name="Terashima Y."/>
            <person name="Suzuki O."/>
            <person name="Nakagawa S."/>
            <person name="Senoh A."/>
            <person name="Mizoguchi H."/>
            <person name="Goto Y."/>
            <person name="Shimizu F."/>
            <person name="Wakebe H."/>
            <person name="Hishigaki H."/>
            <person name="Watanabe T."/>
            <person name="Sugiyama A."/>
            <person name="Takemoto M."/>
            <person name="Kawakami B."/>
            <person name="Yamazaki M."/>
            <person name="Watanabe K."/>
            <person name="Kumagai A."/>
            <person name="Itakura S."/>
            <person name="Fukuzumi Y."/>
            <person name="Fujimori Y."/>
            <person name="Komiyama M."/>
            <person name="Tashiro H."/>
            <person name="Tanigami A."/>
            <person name="Fujiwara T."/>
            <person name="Ono T."/>
            <person name="Yamada K."/>
            <person name="Fujii Y."/>
            <person name="Ozaki K."/>
            <person name="Hirao M."/>
            <person name="Ohmori Y."/>
            <person name="Kawabata A."/>
            <person name="Hikiji T."/>
            <person name="Kobatake N."/>
            <person name="Inagaki H."/>
            <person name="Ikema Y."/>
            <person name="Okamoto S."/>
            <person name="Okitani R."/>
            <person name="Kawakami T."/>
            <person name="Noguchi S."/>
            <person name="Itoh T."/>
            <person name="Shigeta K."/>
            <person name="Senba T."/>
            <person name="Matsumura K."/>
            <person name="Nakajima Y."/>
            <person name="Mizuno T."/>
            <person name="Morinaga M."/>
            <person name="Sasaki M."/>
            <person name="Togashi T."/>
            <person name="Oyama M."/>
            <person name="Hata H."/>
            <person name="Watanabe M."/>
            <person name="Komatsu T."/>
            <person name="Mizushima-Sugano J."/>
            <person name="Satoh T."/>
            <person name="Shirai Y."/>
            <person name="Takahashi Y."/>
            <person name="Nakagawa K."/>
            <person name="Okumura K."/>
            <person name="Nagase T."/>
            <person name="Nomura N."/>
            <person name="Kikuchi H."/>
            <person name="Masuho Y."/>
            <person name="Yamashita R."/>
            <person name="Nakai K."/>
            <person name="Yada T."/>
            <person name="Nakamura Y."/>
            <person name="Ohara O."/>
            <person name="Isogai T."/>
            <person name="Sugano S."/>
        </authorList>
    </citation>
    <scope>NUCLEOTIDE SEQUENCE [LARGE SCALE MRNA]</scope>
    <scope>VARIANTS SER-324; ILE-604 AND ILE-683</scope>
    <source>
        <tissue>Colon</tissue>
        <tissue>Embryo</tissue>
    </source>
</reference>
<reference key="2">
    <citation type="journal article" date="2003" name="Nature">
        <title>The DNA sequence and analysis of human chromosome 6.</title>
        <authorList>
            <person name="Mungall A.J."/>
            <person name="Palmer S.A."/>
            <person name="Sims S.K."/>
            <person name="Edwards C.A."/>
            <person name="Ashurst J.L."/>
            <person name="Wilming L."/>
            <person name="Jones M.C."/>
            <person name="Horton R."/>
            <person name="Hunt S.E."/>
            <person name="Scott C.E."/>
            <person name="Gilbert J.G.R."/>
            <person name="Clamp M.E."/>
            <person name="Bethel G."/>
            <person name="Milne S."/>
            <person name="Ainscough R."/>
            <person name="Almeida J.P."/>
            <person name="Ambrose K.D."/>
            <person name="Andrews T.D."/>
            <person name="Ashwell R.I.S."/>
            <person name="Babbage A.K."/>
            <person name="Bagguley C.L."/>
            <person name="Bailey J."/>
            <person name="Banerjee R."/>
            <person name="Barker D.J."/>
            <person name="Barlow K.F."/>
            <person name="Bates K."/>
            <person name="Beare D.M."/>
            <person name="Beasley H."/>
            <person name="Beasley O."/>
            <person name="Bird C.P."/>
            <person name="Blakey S.E."/>
            <person name="Bray-Allen S."/>
            <person name="Brook J."/>
            <person name="Brown A.J."/>
            <person name="Brown J.Y."/>
            <person name="Burford D.C."/>
            <person name="Burrill W."/>
            <person name="Burton J."/>
            <person name="Carder C."/>
            <person name="Carter N.P."/>
            <person name="Chapman J.C."/>
            <person name="Clark S.Y."/>
            <person name="Clark G."/>
            <person name="Clee C.M."/>
            <person name="Clegg S."/>
            <person name="Cobley V."/>
            <person name="Collier R.E."/>
            <person name="Collins J.E."/>
            <person name="Colman L.K."/>
            <person name="Corby N.R."/>
            <person name="Coville G.J."/>
            <person name="Culley K.M."/>
            <person name="Dhami P."/>
            <person name="Davies J."/>
            <person name="Dunn M."/>
            <person name="Earthrowl M.E."/>
            <person name="Ellington A.E."/>
            <person name="Evans K.A."/>
            <person name="Faulkner L."/>
            <person name="Francis M.D."/>
            <person name="Frankish A."/>
            <person name="Frankland J."/>
            <person name="French L."/>
            <person name="Garner P."/>
            <person name="Garnett J."/>
            <person name="Ghori M.J."/>
            <person name="Gilby L.M."/>
            <person name="Gillson C.J."/>
            <person name="Glithero R.J."/>
            <person name="Grafham D.V."/>
            <person name="Grant M."/>
            <person name="Gribble S."/>
            <person name="Griffiths C."/>
            <person name="Griffiths M.N.D."/>
            <person name="Hall R."/>
            <person name="Halls K.S."/>
            <person name="Hammond S."/>
            <person name="Harley J.L."/>
            <person name="Hart E.A."/>
            <person name="Heath P.D."/>
            <person name="Heathcott R."/>
            <person name="Holmes S.J."/>
            <person name="Howden P.J."/>
            <person name="Howe K.L."/>
            <person name="Howell G.R."/>
            <person name="Huckle E."/>
            <person name="Humphray S.J."/>
            <person name="Humphries M.D."/>
            <person name="Hunt A.R."/>
            <person name="Johnson C.M."/>
            <person name="Joy A.A."/>
            <person name="Kay M."/>
            <person name="Keenan S.J."/>
            <person name="Kimberley A.M."/>
            <person name="King A."/>
            <person name="Laird G.K."/>
            <person name="Langford C."/>
            <person name="Lawlor S."/>
            <person name="Leongamornlert D.A."/>
            <person name="Leversha M."/>
            <person name="Lloyd C.R."/>
            <person name="Lloyd D.M."/>
            <person name="Loveland J.E."/>
            <person name="Lovell J."/>
            <person name="Martin S."/>
            <person name="Mashreghi-Mohammadi M."/>
            <person name="Maslen G.L."/>
            <person name="Matthews L."/>
            <person name="McCann O.T."/>
            <person name="McLaren S.J."/>
            <person name="McLay K."/>
            <person name="McMurray A."/>
            <person name="Moore M.J.F."/>
            <person name="Mullikin J.C."/>
            <person name="Niblett D."/>
            <person name="Nickerson T."/>
            <person name="Novik K.L."/>
            <person name="Oliver K."/>
            <person name="Overton-Larty E.K."/>
            <person name="Parker A."/>
            <person name="Patel R."/>
            <person name="Pearce A.V."/>
            <person name="Peck A.I."/>
            <person name="Phillimore B.J.C.T."/>
            <person name="Phillips S."/>
            <person name="Plumb R.W."/>
            <person name="Porter K.M."/>
            <person name="Ramsey Y."/>
            <person name="Ranby S.A."/>
            <person name="Rice C.M."/>
            <person name="Ross M.T."/>
            <person name="Searle S.M."/>
            <person name="Sehra H.K."/>
            <person name="Sheridan E."/>
            <person name="Skuce C.D."/>
            <person name="Smith S."/>
            <person name="Smith M."/>
            <person name="Spraggon L."/>
            <person name="Squares S.L."/>
            <person name="Steward C.A."/>
            <person name="Sycamore N."/>
            <person name="Tamlyn-Hall G."/>
            <person name="Tester J."/>
            <person name="Theaker A.J."/>
            <person name="Thomas D.W."/>
            <person name="Thorpe A."/>
            <person name="Tracey A."/>
            <person name="Tromans A."/>
            <person name="Tubby B."/>
            <person name="Wall M."/>
            <person name="Wallis J.M."/>
            <person name="West A.P."/>
            <person name="White S.S."/>
            <person name="Whitehead S.L."/>
            <person name="Whittaker H."/>
            <person name="Wild A."/>
            <person name="Willey D.J."/>
            <person name="Wilmer T.E."/>
            <person name="Wood J.M."/>
            <person name="Wray P.W."/>
            <person name="Wyatt J.C."/>
            <person name="Young L."/>
            <person name="Younger R.M."/>
            <person name="Bentley D.R."/>
            <person name="Coulson A."/>
            <person name="Durbin R.M."/>
            <person name="Hubbard T."/>
            <person name="Sulston J.E."/>
            <person name="Dunham I."/>
            <person name="Rogers J."/>
            <person name="Beck S."/>
        </authorList>
    </citation>
    <scope>NUCLEOTIDE SEQUENCE [LARGE SCALE GENOMIC DNA]</scope>
</reference>
<reference key="3">
    <citation type="journal article" date="2004" name="Genome Res.">
        <title>The status, quality, and expansion of the NIH full-length cDNA project: the Mammalian Gene Collection (MGC).</title>
        <authorList>
            <consortium name="The MGC Project Team"/>
        </authorList>
    </citation>
    <scope>NUCLEOTIDE SEQUENCE [LARGE SCALE MRNA]</scope>
    <scope>VARIANTS THR-331 AND ILE-683</scope>
    <source>
        <tissue>Testis</tissue>
    </source>
</reference>
<reference key="4">
    <citation type="journal article" date="2017" name="EBioMedicine">
        <title>The Protein Encoded by the CCDC170 Breast Cancer Gene Functions to Organize the Golgi-Microtubule Network.</title>
        <authorList>
            <person name="Jiang P."/>
            <person name="Li Y."/>
            <person name="Poleshko A."/>
            <person name="Medvedeva V."/>
            <person name="Baulina N."/>
            <person name="Zhang Y."/>
            <person name="Zhou Y."/>
            <person name="Slater C.M."/>
            <person name="Pellegrin T."/>
            <person name="Wasserman J."/>
            <person name="Lindy M."/>
            <person name="Efimov A."/>
            <person name="Daly M."/>
            <person name="Katz R.A."/>
            <person name="Chen X."/>
        </authorList>
    </citation>
    <scope>FUNCTION</scope>
    <scope>SUBCELLULAR LOCATION</scope>
    <scope>MICROTUBULES-BINDING</scope>
</reference>
<dbReference type="EMBL" id="AK026958">
    <property type="protein sequence ID" value="BAB15602.1"/>
    <property type="molecule type" value="mRNA"/>
</dbReference>
<dbReference type="EMBL" id="AK027300">
    <property type="protein sequence ID" value="BAB55025.1"/>
    <property type="status" value="ALT_INIT"/>
    <property type="molecule type" value="mRNA"/>
</dbReference>
<dbReference type="EMBL" id="AL359494">
    <property type="status" value="NOT_ANNOTATED_CDS"/>
    <property type="molecule type" value="Genomic_DNA"/>
</dbReference>
<dbReference type="EMBL" id="AL590543">
    <property type="status" value="NOT_ANNOTATED_CDS"/>
    <property type="molecule type" value="Genomic_DNA"/>
</dbReference>
<dbReference type="EMBL" id="BC060803">
    <property type="protein sequence ID" value="AAH60803.1"/>
    <property type="molecule type" value="mRNA"/>
</dbReference>
<dbReference type="CCDS" id="CCDS43515.1"/>
<dbReference type="RefSeq" id="NP_079335.2">
    <property type="nucleotide sequence ID" value="NM_025059.3"/>
</dbReference>
<dbReference type="SMR" id="Q8IYT3"/>
<dbReference type="BioGRID" id="123130">
    <property type="interactions" value="26"/>
</dbReference>
<dbReference type="FunCoup" id="Q8IYT3">
    <property type="interactions" value="132"/>
</dbReference>
<dbReference type="IntAct" id="Q8IYT3">
    <property type="interactions" value="7"/>
</dbReference>
<dbReference type="STRING" id="9606.ENSP00000239374"/>
<dbReference type="GlyGen" id="Q8IYT3">
    <property type="glycosylation" value="1 site, 5 N-linked glycans (1 site)"/>
</dbReference>
<dbReference type="iPTMnet" id="Q8IYT3"/>
<dbReference type="PhosphoSitePlus" id="Q8IYT3"/>
<dbReference type="BioMuta" id="CCDC170"/>
<dbReference type="DMDM" id="117949395"/>
<dbReference type="jPOST" id="Q8IYT3"/>
<dbReference type="MassIVE" id="Q8IYT3"/>
<dbReference type="PaxDb" id="9606-ENSP00000239374"/>
<dbReference type="PeptideAtlas" id="Q8IYT3"/>
<dbReference type="ProteomicsDB" id="71234"/>
<dbReference type="Pumba" id="Q8IYT3"/>
<dbReference type="Antibodypedia" id="54824">
    <property type="antibodies" value="107 antibodies from 21 providers"/>
</dbReference>
<dbReference type="DNASU" id="80129"/>
<dbReference type="Ensembl" id="ENST00000239374.8">
    <property type="protein sequence ID" value="ENSP00000239374.6"/>
    <property type="gene ID" value="ENSG00000120262.10"/>
</dbReference>
<dbReference type="GeneID" id="80129"/>
<dbReference type="KEGG" id="hsa:80129"/>
<dbReference type="MANE-Select" id="ENST00000239374.8">
    <property type="protein sequence ID" value="ENSP00000239374.6"/>
    <property type="RefSeq nucleotide sequence ID" value="NM_025059.4"/>
    <property type="RefSeq protein sequence ID" value="NP_079335.2"/>
</dbReference>
<dbReference type="UCSC" id="uc003qol.4">
    <property type="organism name" value="human"/>
</dbReference>
<dbReference type="AGR" id="HGNC:21177"/>
<dbReference type="CTD" id="80129"/>
<dbReference type="DisGeNET" id="80129"/>
<dbReference type="GeneCards" id="CCDC170"/>
<dbReference type="HGNC" id="HGNC:21177">
    <property type="gene designation" value="CCDC170"/>
</dbReference>
<dbReference type="HPA" id="ENSG00000120262">
    <property type="expression patterns" value="Tissue enhanced (choroid plexus, fallopian tube)"/>
</dbReference>
<dbReference type="MalaCards" id="CCDC170"/>
<dbReference type="neXtProt" id="NX_Q8IYT3"/>
<dbReference type="OpenTargets" id="ENSG00000120262"/>
<dbReference type="PharmGKB" id="PA134876442"/>
<dbReference type="VEuPathDB" id="HostDB:ENSG00000120262"/>
<dbReference type="eggNOG" id="ENOG502QRTF">
    <property type="taxonomic scope" value="Eukaryota"/>
</dbReference>
<dbReference type="GeneTree" id="ENSGT00390000012924"/>
<dbReference type="HOGENOM" id="CLU_014559_0_0_1"/>
<dbReference type="InParanoid" id="Q8IYT3"/>
<dbReference type="OMA" id="EQRTHNY"/>
<dbReference type="OrthoDB" id="5832575at2759"/>
<dbReference type="PAN-GO" id="Q8IYT3">
    <property type="GO annotations" value="3 GO annotations based on evolutionary models"/>
</dbReference>
<dbReference type="PhylomeDB" id="Q8IYT3"/>
<dbReference type="TreeFam" id="TF325112"/>
<dbReference type="PathwayCommons" id="Q8IYT3"/>
<dbReference type="SignaLink" id="Q8IYT3"/>
<dbReference type="BioGRID-ORCS" id="80129">
    <property type="hits" value="4 hits in 1146 CRISPR screens"/>
</dbReference>
<dbReference type="ChiTaRS" id="CCDC170">
    <property type="organism name" value="human"/>
</dbReference>
<dbReference type="GenomeRNAi" id="80129"/>
<dbReference type="Pharos" id="Q8IYT3">
    <property type="development level" value="Tbio"/>
</dbReference>
<dbReference type="PRO" id="PR:Q8IYT3"/>
<dbReference type="Proteomes" id="UP000005640">
    <property type="component" value="Chromosome 6"/>
</dbReference>
<dbReference type="RNAct" id="Q8IYT3">
    <property type="molecule type" value="protein"/>
</dbReference>
<dbReference type="Bgee" id="ENSG00000120262">
    <property type="expression patterns" value="Expressed in bronchial epithelial cell and 127 other cell types or tissues"/>
</dbReference>
<dbReference type="GO" id="GO:0030054">
    <property type="term" value="C:cell junction"/>
    <property type="evidence" value="ECO:0000314"/>
    <property type="project" value="HPA"/>
</dbReference>
<dbReference type="GO" id="GO:0036064">
    <property type="term" value="C:ciliary basal body"/>
    <property type="evidence" value="ECO:0000314"/>
    <property type="project" value="GO_Central"/>
</dbReference>
<dbReference type="GO" id="GO:0005794">
    <property type="term" value="C:Golgi apparatus"/>
    <property type="evidence" value="ECO:0000314"/>
    <property type="project" value="UniProtKB"/>
</dbReference>
<dbReference type="GO" id="GO:0008017">
    <property type="term" value="F:microtubule binding"/>
    <property type="evidence" value="ECO:0000314"/>
    <property type="project" value="UniProtKB"/>
</dbReference>
<dbReference type="GO" id="GO:0000226">
    <property type="term" value="P:microtubule cytoskeleton organization"/>
    <property type="evidence" value="ECO:0000314"/>
    <property type="project" value="UniProtKB"/>
</dbReference>
<dbReference type="InterPro" id="IPR039139">
    <property type="entry name" value="CCDC170-like"/>
</dbReference>
<dbReference type="PANTHER" id="PTHR18863:SF4">
    <property type="entry name" value="COILED-COIL DOMAIN-CONTAINING PROTEIN 170"/>
    <property type="match status" value="1"/>
</dbReference>
<dbReference type="PANTHER" id="PTHR18863">
    <property type="entry name" value="TSEC-2-RELATED"/>
    <property type="match status" value="1"/>
</dbReference>